<protein>
    <recommendedName>
        <fullName evidence="1">DNA-directed RNA polymerase subunit omega</fullName>
        <shortName evidence="1">RNAP omega subunit</shortName>
        <ecNumber evidence="1">2.7.7.6</ecNumber>
    </recommendedName>
    <alternativeName>
        <fullName evidence="1">RNA polymerase omega subunit</fullName>
    </alternativeName>
    <alternativeName>
        <fullName evidence="1">Transcriptase subunit omega</fullName>
    </alternativeName>
</protein>
<gene>
    <name evidence="1" type="primary">rpoZ</name>
    <name type="ordered locus">TW407</name>
</gene>
<reference key="1">
    <citation type="journal article" date="2003" name="Lancet">
        <title>Sequencing and analysis of the genome of the Whipple's disease bacterium Tropheryma whipplei.</title>
        <authorList>
            <person name="Bentley S.D."/>
            <person name="Maiwald M."/>
            <person name="Murphy L.D."/>
            <person name="Pallen M.J."/>
            <person name="Yeats C.A."/>
            <person name="Dover L.G."/>
            <person name="Norbertczak H.T."/>
            <person name="Besra G.S."/>
            <person name="Quail M.A."/>
            <person name="Harris D.E."/>
            <person name="von Herbay A."/>
            <person name="Goble A."/>
            <person name="Rutter S."/>
            <person name="Squares R."/>
            <person name="Squares S."/>
            <person name="Barrell B.G."/>
            <person name="Parkhill J."/>
            <person name="Relman D.A."/>
        </authorList>
    </citation>
    <scope>NUCLEOTIDE SEQUENCE [LARGE SCALE GENOMIC DNA]</scope>
    <source>
        <strain>TW08/27</strain>
    </source>
</reference>
<dbReference type="EC" id="2.7.7.6" evidence="1"/>
<dbReference type="EMBL" id="BX251411">
    <property type="protein sequence ID" value="CAD67078.1"/>
    <property type="molecule type" value="Genomic_DNA"/>
</dbReference>
<dbReference type="RefSeq" id="WP_011096358.1">
    <property type="nucleotide sequence ID" value="NC_004551.1"/>
</dbReference>
<dbReference type="SMR" id="Q820D7"/>
<dbReference type="GeneID" id="67388185"/>
<dbReference type="KEGG" id="tws:TW407"/>
<dbReference type="HOGENOM" id="CLU_125406_1_1_11"/>
<dbReference type="GO" id="GO:0000428">
    <property type="term" value="C:DNA-directed RNA polymerase complex"/>
    <property type="evidence" value="ECO:0007669"/>
    <property type="project" value="UniProtKB-KW"/>
</dbReference>
<dbReference type="GO" id="GO:0003677">
    <property type="term" value="F:DNA binding"/>
    <property type="evidence" value="ECO:0007669"/>
    <property type="project" value="UniProtKB-UniRule"/>
</dbReference>
<dbReference type="GO" id="GO:0003899">
    <property type="term" value="F:DNA-directed RNA polymerase activity"/>
    <property type="evidence" value="ECO:0007669"/>
    <property type="project" value="UniProtKB-UniRule"/>
</dbReference>
<dbReference type="GO" id="GO:0006351">
    <property type="term" value="P:DNA-templated transcription"/>
    <property type="evidence" value="ECO:0007669"/>
    <property type="project" value="UniProtKB-UniRule"/>
</dbReference>
<dbReference type="Gene3D" id="3.90.940.10">
    <property type="match status" value="1"/>
</dbReference>
<dbReference type="HAMAP" id="MF_00366">
    <property type="entry name" value="RNApol_bact_RpoZ"/>
    <property type="match status" value="1"/>
</dbReference>
<dbReference type="InterPro" id="IPR003716">
    <property type="entry name" value="DNA-dir_RNA_pol_omega"/>
</dbReference>
<dbReference type="InterPro" id="IPR006110">
    <property type="entry name" value="Pol_omega/Rpo6/RPB6"/>
</dbReference>
<dbReference type="InterPro" id="IPR036161">
    <property type="entry name" value="RPB6/omega-like_sf"/>
</dbReference>
<dbReference type="NCBIfam" id="TIGR00690">
    <property type="entry name" value="rpoZ"/>
    <property type="match status" value="1"/>
</dbReference>
<dbReference type="PANTHER" id="PTHR34476">
    <property type="entry name" value="DNA-DIRECTED RNA POLYMERASE SUBUNIT OMEGA"/>
    <property type="match status" value="1"/>
</dbReference>
<dbReference type="PANTHER" id="PTHR34476:SF1">
    <property type="entry name" value="DNA-DIRECTED RNA POLYMERASE SUBUNIT OMEGA"/>
    <property type="match status" value="1"/>
</dbReference>
<dbReference type="Pfam" id="PF01192">
    <property type="entry name" value="RNA_pol_Rpb6"/>
    <property type="match status" value="1"/>
</dbReference>
<dbReference type="SMART" id="SM01409">
    <property type="entry name" value="RNA_pol_Rpb6"/>
    <property type="match status" value="1"/>
</dbReference>
<dbReference type="SUPFAM" id="SSF63562">
    <property type="entry name" value="RPB6/omega subunit-like"/>
    <property type="match status" value="1"/>
</dbReference>
<feature type="chain" id="PRO_0000129008" description="DNA-directed RNA polymerase subunit omega">
    <location>
        <begin position="1"/>
        <end position="85"/>
    </location>
</feature>
<proteinExistence type="inferred from homology"/>
<keyword id="KW-0240">DNA-directed RNA polymerase</keyword>
<keyword id="KW-0548">Nucleotidyltransferase</keyword>
<keyword id="KW-0804">Transcription</keyword>
<keyword id="KW-0808">Transferase</keyword>
<comment type="function">
    <text evidence="1">Promotes RNA polymerase assembly. Latches the N- and C-terminal regions of the beta' subunit thereby facilitating its interaction with the beta and alpha subunits.</text>
</comment>
<comment type="catalytic activity">
    <reaction evidence="1">
        <text>RNA(n) + a ribonucleoside 5'-triphosphate = RNA(n+1) + diphosphate</text>
        <dbReference type="Rhea" id="RHEA:21248"/>
        <dbReference type="Rhea" id="RHEA-COMP:14527"/>
        <dbReference type="Rhea" id="RHEA-COMP:17342"/>
        <dbReference type="ChEBI" id="CHEBI:33019"/>
        <dbReference type="ChEBI" id="CHEBI:61557"/>
        <dbReference type="ChEBI" id="CHEBI:140395"/>
        <dbReference type="EC" id="2.7.7.6"/>
    </reaction>
</comment>
<comment type="subunit">
    <text evidence="1">The RNAP catalytic core consists of 2 alpha, 1 beta, 1 beta' and 1 omega subunit. When a sigma factor is associated with the core the holoenzyme is formed, which can initiate transcription.</text>
</comment>
<comment type="similarity">
    <text evidence="1">Belongs to the RNA polymerase subunit omega family.</text>
</comment>
<organism>
    <name type="scientific">Tropheryma whipplei (strain TW08/27)</name>
    <name type="common">Whipple's bacillus</name>
    <dbReference type="NCBI Taxonomy" id="218496"/>
    <lineage>
        <taxon>Bacteria</taxon>
        <taxon>Bacillati</taxon>
        <taxon>Actinomycetota</taxon>
        <taxon>Actinomycetes</taxon>
        <taxon>Micrococcales</taxon>
        <taxon>Tropherymataceae</taxon>
        <taxon>Tropheryma</taxon>
    </lineage>
</organism>
<evidence type="ECO:0000255" key="1">
    <source>
        <dbReference type="HAMAP-Rule" id="MF_00366"/>
    </source>
</evidence>
<accession>Q820D7</accession>
<sequence length="85" mass="9373">MEEDRGIADPPLDSLLSRSGSKYGLVIYAAKRARQIDQYYIDLHEGSFYAHVGPLVSVDADDKSLTVAMREIAEDKLDLKSSAAE</sequence>
<name>RPOZ_TROW8</name>